<comment type="similarity">
    <text evidence="1">Belongs to the YeeT/YkfH/YpjJ family.</text>
</comment>
<feature type="chain" id="PRO_0000169114" description="Uncharacterized protein YeeT">
    <location>
        <begin position="1"/>
        <end position="73"/>
    </location>
</feature>
<evidence type="ECO:0000305" key="1"/>
<dbReference type="EMBL" id="AE014075">
    <property type="protein sequence ID" value="AAN80984.1"/>
    <property type="molecule type" value="Genomic_DNA"/>
</dbReference>
<dbReference type="RefSeq" id="WP_000692323.1">
    <property type="nucleotide sequence ID" value="NZ_CP051263.1"/>
</dbReference>
<dbReference type="STRING" id="199310.c2530"/>
<dbReference type="KEGG" id="ecc:c2530"/>
<dbReference type="eggNOG" id="ENOG50333DH">
    <property type="taxonomic scope" value="Bacteria"/>
</dbReference>
<dbReference type="HOGENOM" id="CLU_201031_0_0_6"/>
<dbReference type="BioCyc" id="ECOL199310:C2530-MONOMER"/>
<dbReference type="Proteomes" id="UP000001410">
    <property type="component" value="Chromosome"/>
</dbReference>
<dbReference type="InterPro" id="IPR009329">
    <property type="entry name" value="DUF987"/>
</dbReference>
<dbReference type="Pfam" id="PF06174">
    <property type="entry name" value="DUF987"/>
    <property type="match status" value="1"/>
</dbReference>
<proteinExistence type="inferred from homology"/>
<organism>
    <name type="scientific">Escherichia coli O6:H1 (strain CFT073 / ATCC 700928 / UPEC)</name>
    <dbReference type="NCBI Taxonomy" id="199310"/>
    <lineage>
        <taxon>Bacteria</taxon>
        <taxon>Pseudomonadati</taxon>
        <taxon>Pseudomonadota</taxon>
        <taxon>Gammaproteobacteria</taxon>
        <taxon>Enterobacterales</taxon>
        <taxon>Enterobacteriaceae</taxon>
        <taxon>Escherichia</taxon>
    </lineage>
</organism>
<reference key="1">
    <citation type="journal article" date="2002" name="Proc. Natl. Acad. Sci. U.S.A.">
        <title>Extensive mosaic structure revealed by the complete genome sequence of uropathogenic Escherichia coli.</title>
        <authorList>
            <person name="Welch R.A."/>
            <person name="Burland V."/>
            <person name="Plunkett G. III"/>
            <person name="Redford P."/>
            <person name="Roesch P."/>
            <person name="Rasko D."/>
            <person name="Buckles E.L."/>
            <person name="Liou S.-R."/>
            <person name="Boutin A."/>
            <person name="Hackett J."/>
            <person name="Stroud D."/>
            <person name="Mayhew G.F."/>
            <person name="Rose D.J."/>
            <person name="Zhou S."/>
            <person name="Schwartz D.C."/>
            <person name="Perna N.T."/>
            <person name="Mobley H.L.T."/>
            <person name="Donnenberg M.S."/>
            <person name="Blattner F.R."/>
        </authorList>
    </citation>
    <scope>NUCLEOTIDE SEQUENCE [LARGE SCALE GENOMIC DNA]</scope>
    <source>
        <strain>CFT073 / ATCC 700928 / UPEC</strain>
    </source>
</reference>
<sequence length="73" mass="8411">MKIITRGEAMRIHQQHPTSRLFPFCTGKYRWHGSAEAYTGREVQDIPGVLAVFAERRKDSFGPYVRLMSVTLN</sequence>
<name>YEET_ECOL6</name>
<protein>
    <recommendedName>
        <fullName>Uncharacterized protein YeeT</fullName>
    </recommendedName>
</protein>
<accession>P64522</accession>
<accession>P76363</accession>
<keyword id="KW-1185">Reference proteome</keyword>
<gene>
    <name type="primary">yeeT</name>
    <name type="ordered locus">c2530</name>
</gene>